<name>PYRE_BUCAT</name>
<feature type="chain" id="PRO_1000164675" description="Orotate phosphoribosyltransferase">
    <location>
        <begin position="1"/>
        <end position="213"/>
    </location>
</feature>
<feature type="binding site" description="in other chain" evidence="1">
    <location>
        <position position="25"/>
    </location>
    <ligand>
        <name>5-phospho-alpha-D-ribose 1-diphosphate</name>
        <dbReference type="ChEBI" id="CHEBI:58017"/>
        <note>ligand shared between dimeric partners</note>
    </ligand>
</feature>
<feature type="binding site" evidence="1">
    <location>
        <begin position="33"/>
        <end position="34"/>
    </location>
    <ligand>
        <name>orotate</name>
        <dbReference type="ChEBI" id="CHEBI:30839"/>
    </ligand>
</feature>
<feature type="binding site" description="in other chain" evidence="1">
    <location>
        <begin position="71"/>
        <end position="72"/>
    </location>
    <ligand>
        <name>5-phospho-alpha-D-ribose 1-diphosphate</name>
        <dbReference type="ChEBI" id="CHEBI:58017"/>
        <note>ligand shared between dimeric partners</note>
    </ligand>
</feature>
<feature type="binding site" evidence="1">
    <location>
        <position position="98"/>
    </location>
    <ligand>
        <name>5-phospho-alpha-D-ribose 1-diphosphate</name>
        <dbReference type="ChEBI" id="CHEBI:58017"/>
        <note>ligand shared between dimeric partners</note>
    </ligand>
</feature>
<feature type="binding site" description="in other chain" evidence="1">
    <location>
        <position position="99"/>
    </location>
    <ligand>
        <name>5-phospho-alpha-D-ribose 1-diphosphate</name>
        <dbReference type="ChEBI" id="CHEBI:58017"/>
        <note>ligand shared between dimeric partners</note>
    </ligand>
</feature>
<feature type="binding site" evidence="1">
    <location>
        <position position="102"/>
    </location>
    <ligand>
        <name>5-phospho-alpha-D-ribose 1-diphosphate</name>
        <dbReference type="ChEBI" id="CHEBI:58017"/>
        <note>ligand shared between dimeric partners</note>
    </ligand>
</feature>
<feature type="binding site" evidence="1">
    <location>
        <position position="104"/>
    </location>
    <ligand>
        <name>5-phospho-alpha-D-ribose 1-diphosphate</name>
        <dbReference type="ChEBI" id="CHEBI:58017"/>
        <note>ligand shared between dimeric partners</note>
    </ligand>
</feature>
<feature type="binding site" description="in other chain" evidence="1">
    <location>
        <begin position="124"/>
        <end position="132"/>
    </location>
    <ligand>
        <name>5-phospho-alpha-D-ribose 1-diphosphate</name>
        <dbReference type="ChEBI" id="CHEBI:58017"/>
        <note>ligand shared between dimeric partners</note>
    </ligand>
</feature>
<feature type="binding site" evidence="1">
    <location>
        <position position="128"/>
    </location>
    <ligand>
        <name>orotate</name>
        <dbReference type="ChEBI" id="CHEBI:30839"/>
    </ligand>
</feature>
<feature type="binding site" evidence="1">
    <location>
        <position position="156"/>
    </location>
    <ligand>
        <name>orotate</name>
        <dbReference type="ChEBI" id="CHEBI:30839"/>
    </ligand>
</feature>
<dbReference type="EC" id="2.4.2.10" evidence="1"/>
<dbReference type="EMBL" id="CP001158">
    <property type="protein sequence ID" value="ACL30345.1"/>
    <property type="molecule type" value="Genomic_DNA"/>
</dbReference>
<dbReference type="RefSeq" id="WP_009874507.1">
    <property type="nucleotide sequence ID" value="NC_011834.1"/>
</dbReference>
<dbReference type="SMR" id="B8D880"/>
<dbReference type="KEGG" id="bau:BUAPTUC7_553"/>
<dbReference type="HOGENOM" id="CLU_074878_0_1_6"/>
<dbReference type="UniPathway" id="UPA00070">
    <property type="reaction ID" value="UER00119"/>
</dbReference>
<dbReference type="GO" id="GO:0005737">
    <property type="term" value="C:cytoplasm"/>
    <property type="evidence" value="ECO:0007669"/>
    <property type="project" value="TreeGrafter"/>
</dbReference>
<dbReference type="GO" id="GO:0000287">
    <property type="term" value="F:magnesium ion binding"/>
    <property type="evidence" value="ECO:0007669"/>
    <property type="project" value="UniProtKB-UniRule"/>
</dbReference>
<dbReference type="GO" id="GO:0004588">
    <property type="term" value="F:orotate phosphoribosyltransferase activity"/>
    <property type="evidence" value="ECO:0007669"/>
    <property type="project" value="UniProtKB-UniRule"/>
</dbReference>
<dbReference type="GO" id="GO:0006207">
    <property type="term" value="P:'de novo' pyrimidine nucleobase biosynthetic process"/>
    <property type="evidence" value="ECO:0007669"/>
    <property type="project" value="TreeGrafter"/>
</dbReference>
<dbReference type="GO" id="GO:0044205">
    <property type="term" value="P:'de novo' UMP biosynthetic process"/>
    <property type="evidence" value="ECO:0007669"/>
    <property type="project" value="UniProtKB-UniRule"/>
</dbReference>
<dbReference type="GO" id="GO:0046132">
    <property type="term" value="P:pyrimidine ribonucleoside biosynthetic process"/>
    <property type="evidence" value="ECO:0007669"/>
    <property type="project" value="TreeGrafter"/>
</dbReference>
<dbReference type="CDD" id="cd06223">
    <property type="entry name" value="PRTases_typeI"/>
    <property type="match status" value="1"/>
</dbReference>
<dbReference type="FunFam" id="3.40.50.2020:FF:000008">
    <property type="entry name" value="Orotate phosphoribosyltransferase"/>
    <property type="match status" value="1"/>
</dbReference>
<dbReference type="Gene3D" id="3.40.50.2020">
    <property type="match status" value="1"/>
</dbReference>
<dbReference type="HAMAP" id="MF_01208">
    <property type="entry name" value="PyrE"/>
    <property type="match status" value="1"/>
</dbReference>
<dbReference type="InterPro" id="IPR023031">
    <property type="entry name" value="OPRT"/>
</dbReference>
<dbReference type="InterPro" id="IPR004467">
    <property type="entry name" value="Or_phspho_trans_dom"/>
</dbReference>
<dbReference type="InterPro" id="IPR000836">
    <property type="entry name" value="PRibTrfase_dom"/>
</dbReference>
<dbReference type="InterPro" id="IPR029057">
    <property type="entry name" value="PRTase-like"/>
</dbReference>
<dbReference type="NCBIfam" id="TIGR00336">
    <property type="entry name" value="pyrE"/>
    <property type="match status" value="1"/>
</dbReference>
<dbReference type="PANTHER" id="PTHR46683">
    <property type="entry name" value="OROTATE PHOSPHORIBOSYLTRANSFERASE 1-RELATED"/>
    <property type="match status" value="1"/>
</dbReference>
<dbReference type="PANTHER" id="PTHR46683:SF1">
    <property type="entry name" value="OROTATE PHOSPHORIBOSYLTRANSFERASE 1-RELATED"/>
    <property type="match status" value="1"/>
</dbReference>
<dbReference type="Pfam" id="PF00156">
    <property type="entry name" value="Pribosyltran"/>
    <property type="match status" value="1"/>
</dbReference>
<dbReference type="SUPFAM" id="SSF53271">
    <property type="entry name" value="PRTase-like"/>
    <property type="match status" value="1"/>
</dbReference>
<dbReference type="PROSITE" id="PS00103">
    <property type="entry name" value="PUR_PYR_PR_TRANSFER"/>
    <property type="match status" value="1"/>
</dbReference>
<comment type="function">
    <text evidence="1">Catalyzes the transfer of a ribosyl phosphate group from 5-phosphoribose 1-diphosphate to orotate, leading to the formation of orotidine monophosphate (OMP).</text>
</comment>
<comment type="catalytic activity">
    <reaction evidence="1">
        <text>orotidine 5'-phosphate + diphosphate = orotate + 5-phospho-alpha-D-ribose 1-diphosphate</text>
        <dbReference type="Rhea" id="RHEA:10380"/>
        <dbReference type="ChEBI" id="CHEBI:30839"/>
        <dbReference type="ChEBI" id="CHEBI:33019"/>
        <dbReference type="ChEBI" id="CHEBI:57538"/>
        <dbReference type="ChEBI" id="CHEBI:58017"/>
        <dbReference type="EC" id="2.4.2.10"/>
    </reaction>
</comment>
<comment type="cofactor">
    <cofactor evidence="1">
        <name>Mg(2+)</name>
        <dbReference type="ChEBI" id="CHEBI:18420"/>
    </cofactor>
</comment>
<comment type="pathway">
    <text evidence="1">Pyrimidine metabolism; UMP biosynthesis via de novo pathway; UMP from orotate: step 1/2.</text>
</comment>
<comment type="subunit">
    <text evidence="1">Homodimer.</text>
</comment>
<comment type="similarity">
    <text evidence="1">Belongs to the purine/pyrimidine phosphoribosyltransferase family. PyrE subfamily.</text>
</comment>
<protein>
    <recommendedName>
        <fullName evidence="1">Orotate phosphoribosyltransferase</fullName>
        <shortName evidence="1">OPRT</shortName>
        <shortName evidence="1">OPRTase</shortName>
        <ecNumber evidence="1">2.4.2.10</ecNumber>
    </recommendedName>
</protein>
<proteinExistence type="inferred from homology"/>
<gene>
    <name evidence="1" type="primary">pyrE</name>
    <name type="ordered locus">BUAPTUC7_553</name>
</gene>
<reference key="1">
    <citation type="journal article" date="2009" name="Science">
        <title>The dynamics and time scale of ongoing genomic erosion in symbiotic bacteria.</title>
        <authorList>
            <person name="Moran N.A."/>
            <person name="McLaughlin H.J."/>
            <person name="Sorek R."/>
        </authorList>
    </citation>
    <scope>NUCLEOTIDE SEQUENCE [LARGE SCALE GENOMIC DNA]</scope>
    <source>
        <strain>Tuc7</strain>
    </source>
</reference>
<organism>
    <name type="scientific">Buchnera aphidicola subsp. Acyrthosiphon pisum (strain Tuc7)</name>
    <dbReference type="NCBI Taxonomy" id="561501"/>
    <lineage>
        <taxon>Bacteria</taxon>
        <taxon>Pseudomonadati</taxon>
        <taxon>Pseudomonadota</taxon>
        <taxon>Gammaproteobacteria</taxon>
        <taxon>Enterobacterales</taxon>
        <taxon>Erwiniaceae</taxon>
        <taxon>Buchnera</taxon>
    </lineage>
</organism>
<sequence length="213" mass="24610">MDWKKEFIDFSFKKKVLKFGVFQLKSGRISPYFFNSGLLSTGIDIIKIGLFYARSIIDSKNKFDVLFGPAYKGIPIAVATSIALKNHYNLNVPYSFNRKEYKEHGEKGDLIGSTIYKKRVIILDDVITSGTAIHHSIKIIEKQEASISSIFVLLDRKEKGIRKLSTINHFRNQKSYKIISIITIDDLIEYVLEDKKLKEHIPQLIKYREKYGI</sequence>
<keyword id="KW-0328">Glycosyltransferase</keyword>
<keyword id="KW-0460">Magnesium</keyword>
<keyword id="KW-0665">Pyrimidine biosynthesis</keyword>
<keyword id="KW-0808">Transferase</keyword>
<accession>B8D880</accession>
<evidence type="ECO:0000255" key="1">
    <source>
        <dbReference type="HAMAP-Rule" id="MF_01208"/>
    </source>
</evidence>